<reference key="1">
    <citation type="journal article" date="2006" name="J. Bacteriol.">
        <title>The genome sequence of the obligately chemolithoautotrophic, facultatively anaerobic bacterium Thiobacillus denitrificans.</title>
        <authorList>
            <person name="Beller H.R."/>
            <person name="Chain P.S."/>
            <person name="Letain T.E."/>
            <person name="Chakicherla A."/>
            <person name="Larimer F.W."/>
            <person name="Richardson P.M."/>
            <person name="Coleman M.A."/>
            <person name="Wood A.P."/>
            <person name="Kelly D.P."/>
        </authorList>
    </citation>
    <scope>NUCLEOTIDE SEQUENCE [LARGE SCALE GENOMIC DNA]</scope>
    <source>
        <strain>ATCC 25259 / T1</strain>
    </source>
</reference>
<sequence>MNDMTPPVPRRSVSEIEALFALPFADLMYQAQGVHRAHFDPNRIQLSTLLSIKTGGCSEDCGYCPQSVHYDAGVESQGLLDLGDVLKAARAAKDAGASRFCMGAAWRGPKQRELEPVLAMVREVKALGLETCATLGMLKDGQAEQLKEAGLDYYNHNLDTAPEFYGEIITTRDYQDRLDTLERVRRADLHVCCGGIVGMGESRTQRAGLIAQLAALDPQPESVPINLLVRVEGTPLAETEALEPLEFVRTIAVTRLCMPKSFVRLSAGRQQMSDAVQALCFLAGANSIFYGEKLLTTGNPEWERDQRLFDSLGVTAL</sequence>
<proteinExistence type="inferred from homology"/>
<gene>
    <name evidence="1" type="primary">bioB</name>
    <name type="ordered locus">Tbd_0319</name>
</gene>
<dbReference type="EC" id="2.8.1.6" evidence="1"/>
<dbReference type="EMBL" id="CP000116">
    <property type="protein sequence ID" value="AAZ96272.1"/>
    <property type="molecule type" value="Genomic_DNA"/>
</dbReference>
<dbReference type="RefSeq" id="WP_011310832.1">
    <property type="nucleotide sequence ID" value="NC_007404.1"/>
</dbReference>
<dbReference type="SMR" id="Q3SLY0"/>
<dbReference type="STRING" id="292415.Tbd_0319"/>
<dbReference type="KEGG" id="tbd:Tbd_0319"/>
<dbReference type="eggNOG" id="COG0502">
    <property type="taxonomic scope" value="Bacteria"/>
</dbReference>
<dbReference type="HOGENOM" id="CLU_033172_1_2_4"/>
<dbReference type="OrthoDB" id="9786826at2"/>
<dbReference type="UniPathway" id="UPA00078">
    <property type="reaction ID" value="UER00162"/>
</dbReference>
<dbReference type="Proteomes" id="UP000008291">
    <property type="component" value="Chromosome"/>
</dbReference>
<dbReference type="GO" id="GO:0051537">
    <property type="term" value="F:2 iron, 2 sulfur cluster binding"/>
    <property type="evidence" value="ECO:0007669"/>
    <property type="project" value="UniProtKB-KW"/>
</dbReference>
<dbReference type="GO" id="GO:0051539">
    <property type="term" value="F:4 iron, 4 sulfur cluster binding"/>
    <property type="evidence" value="ECO:0007669"/>
    <property type="project" value="UniProtKB-KW"/>
</dbReference>
<dbReference type="GO" id="GO:0004076">
    <property type="term" value="F:biotin synthase activity"/>
    <property type="evidence" value="ECO:0007669"/>
    <property type="project" value="UniProtKB-UniRule"/>
</dbReference>
<dbReference type="GO" id="GO:0005506">
    <property type="term" value="F:iron ion binding"/>
    <property type="evidence" value="ECO:0007669"/>
    <property type="project" value="UniProtKB-UniRule"/>
</dbReference>
<dbReference type="GO" id="GO:0009102">
    <property type="term" value="P:biotin biosynthetic process"/>
    <property type="evidence" value="ECO:0007669"/>
    <property type="project" value="UniProtKB-UniRule"/>
</dbReference>
<dbReference type="CDD" id="cd01335">
    <property type="entry name" value="Radical_SAM"/>
    <property type="match status" value="1"/>
</dbReference>
<dbReference type="FunFam" id="3.20.20.70:FF:000011">
    <property type="entry name" value="Biotin synthase"/>
    <property type="match status" value="1"/>
</dbReference>
<dbReference type="Gene3D" id="3.20.20.70">
    <property type="entry name" value="Aldolase class I"/>
    <property type="match status" value="1"/>
</dbReference>
<dbReference type="HAMAP" id="MF_01694">
    <property type="entry name" value="BioB"/>
    <property type="match status" value="1"/>
</dbReference>
<dbReference type="InterPro" id="IPR013785">
    <property type="entry name" value="Aldolase_TIM"/>
</dbReference>
<dbReference type="InterPro" id="IPR010722">
    <property type="entry name" value="BATS_dom"/>
</dbReference>
<dbReference type="InterPro" id="IPR002684">
    <property type="entry name" value="Biotin_synth/BioAB"/>
</dbReference>
<dbReference type="InterPro" id="IPR024177">
    <property type="entry name" value="Biotin_synthase"/>
</dbReference>
<dbReference type="InterPro" id="IPR006638">
    <property type="entry name" value="Elp3/MiaA/NifB-like_rSAM"/>
</dbReference>
<dbReference type="InterPro" id="IPR007197">
    <property type="entry name" value="rSAM"/>
</dbReference>
<dbReference type="NCBIfam" id="TIGR00433">
    <property type="entry name" value="bioB"/>
    <property type="match status" value="1"/>
</dbReference>
<dbReference type="PANTHER" id="PTHR22976">
    <property type="entry name" value="BIOTIN SYNTHASE"/>
    <property type="match status" value="1"/>
</dbReference>
<dbReference type="PANTHER" id="PTHR22976:SF2">
    <property type="entry name" value="BIOTIN SYNTHASE, MITOCHONDRIAL"/>
    <property type="match status" value="1"/>
</dbReference>
<dbReference type="Pfam" id="PF06968">
    <property type="entry name" value="BATS"/>
    <property type="match status" value="1"/>
</dbReference>
<dbReference type="Pfam" id="PF04055">
    <property type="entry name" value="Radical_SAM"/>
    <property type="match status" value="1"/>
</dbReference>
<dbReference type="PIRSF" id="PIRSF001619">
    <property type="entry name" value="Biotin_synth"/>
    <property type="match status" value="1"/>
</dbReference>
<dbReference type="SFLD" id="SFLDF00272">
    <property type="entry name" value="biotin_synthase"/>
    <property type="match status" value="1"/>
</dbReference>
<dbReference type="SFLD" id="SFLDG01278">
    <property type="entry name" value="biotin_synthase_like"/>
    <property type="match status" value="1"/>
</dbReference>
<dbReference type="SMART" id="SM00876">
    <property type="entry name" value="BATS"/>
    <property type="match status" value="1"/>
</dbReference>
<dbReference type="SMART" id="SM00729">
    <property type="entry name" value="Elp3"/>
    <property type="match status" value="1"/>
</dbReference>
<dbReference type="SUPFAM" id="SSF102114">
    <property type="entry name" value="Radical SAM enzymes"/>
    <property type="match status" value="1"/>
</dbReference>
<dbReference type="PROSITE" id="PS51918">
    <property type="entry name" value="RADICAL_SAM"/>
    <property type="match status" value="1"/>
</dbReference>
<evidence type="ECO:0000255" key="1">
    <source>
        <dbReference type="HAMAP-Rule" id="MF_01694"/>
    </source>
</evidence>
<evidence type="ECO:0000255" key="2">
    <source>
        <dbReference type="PROSITE-ProRule" id="PRU01266"/>
    </source>
</evidence>
<name>BIOB_THIDA</name>
<organism>
    <name type="scientific">Thiobacillus denitrificans (strain ATCC 25259 / T1)</name>
    <dbReference type="NCBI Taxonomy" id="292415"/>
    <lineage>
        <taxon>Bacteria</taxon>
        <taxon>Pseudomonadati</taxon>
        <taxon>Pseudomonadota</taxon>
        <taxon>Betaproteobacteria</taxon>
        <taxon>Nitrosomonadales</taxon>
        <taxon>Thiobacillaceae</taxon>
        <taxon>Thiobacillus</taxon>
    </lineage>
</organism>
<feature type="chain" id="PRO_0000381690" description="Biotin synthase">
    <location>
        <begin position="1"/>
        <end position="317"/>
    </location>
</feature>
<feature type="domain" description="Radical SAM core" evidence="2">
    <location>
        <begin position="42"/>
        <end position="260"/>
    </location>
</feature>
<feature type="binding site" evidence="1">
    <location>
        <position position="57"/>
    </location>
    <ligand>
        <name>[4Fe-4S] cluster</name>
        <dbReference type="ChEBI" id="CHEBI:49883"/>
        <note>4Fe-4S-S-AdoMet</note>
    </ligand>
</feature>
<feature type="binding site" evidence="1">
    <location>
        <position position="61"/>
    </location>
    <ligand>
        <name>[4Fe-4S] cluster</name>
        <dbReference type="ChEBI" id="CHEBI:49883"/>
        <note>4Fe-4S-S-AdoMet</note>
    </ligand>
</feature>
<feature type="binding site" evidence="1">
    <location>
        <position position="64"/>
    </location>
    <ligand>
        <name>[4Fe-4S] cluster</name>
        <dbReference type="ChEBI" id="CHEBI:49883"/>
        <note>4Fe-4S-S-AdoMet</note>
    </ligand>
</feature>
<feature type="binding site" evidence="1">
    <location>
        <position position="101"/>
    </location>
    <ligand>
        <name>[2Fe-2S] cluster</name>
        <dbReference type="ChEBI" id="CHEBI:190135"/>
    </ligand>
</feature>
<feature type="binding site" evidence="1">
    <location>
        <position position="132"/>
    </location>
    <ligand>
        <name>[2Fe-2S] cluster</name>
        <dbReference type="ChEBI" id="CHEBI:190135"/>
    </ligand>
</feature>
<feature type="binding site" evidence="1">
    <location>
        <position position="192"/>
    </location>
    <ligand>
        <name>[2Fe-2S] cluster</name>
        <dbReference type="ChEBI" id="CHEBI:190135"/>
    </ligand>
</feature>
<feature type="binding site" evidence="1">
    <location>
        <position position="264"/>
    </location>
    <ligand>
        <name>[2Fe-2S] cluster</name>
        <dbReference type="ChEBI" id="CHEBI:190135"/>
    </ligand>
</feature>
<protein>
    <recommendedName>
        <fullName evidence="1">Biotin synthase</fullName>
        <ecNumber evidence="1">2.8.1.6</ecNumber>
    </recommendedName>
</protein>
<accession>Q3SLY0</accession>
<keyword id="KW-0001">2Fe-2S</keyword>
<keyword id="KW-0004">4Fe-4S</keyword>
<keyword id="KW-0093">Biotin biosynthesis</keyword>
<keyword id="KW-0408">Iron</keyword>
<keyword id="KW-0411">Iron-sulfur</keyword>
<keyword id="KW-0479">Metal-binding</keyword>
<keyword id="KW-1185">Reference proteome</keyword>
<keyword id="KW-0949">S-adenosyl-L-methionine</keyword>
<keyword id="KW-0808">Transferase</keyword>
<comment type="function">
    <text evidence="1">Catalyzes the conversion of dethiobiotin (DTB) to biotin by the insertion of a sulfur atom into dethiobiotin via a radical-based mechanism.</text>
</comment>
<comment type="catalytic activity">
    <reaction evidence="1">
        <text>(4R,5S)-dethiobiotin + (sulfur carrier)-SH + 2 reduced [2Fe-2S]-[ferredoxin] + 2 S-adenosyl-L-methionine = (sulfur carrier)-H + biotin + 2 5'-deoxyadenosine + 2 L-methionine + 2 oxidized [2Fe-2S]-[ferredoxin]</text>
        <dbReference type="Rhea" id="RHEA:22060"/>
        <dbReference type="Rhea" id="RHEA-COMP:10000"/>
        <dbReference type="Rhea" id="RHEA-COMP:10001"/>
        <dbReference type="Rhea" id="RHEA-COMP:14737"/>
        <dbReference type="Rhea" id="RHEA-COMP:14739"/>
        <dbReference type="ChEBI" id="CHEBI:17319"/>
        <dbReference type="ChEBI" id="CHEBI:29917"/>
        <dbReference type="ChEBI" id="CHEBI:33737"/>
        <dbReference type="ChEBI" id="CHEBI:33738"/>
        <dbReference type="ChEBI" id="CHEBI:57586"/>
        <dbReference type="ChEBI" id="CHEBI:57844"/>
        <dbReference type="ChEBI" id="CHEBI:59789"/>
        <dbReference type="ChEBI" id="CHEBI:64428"/>
        <dbReference type="ChEBI" id="CHEBI:149473"/>
        <dbReference type="EC" id="2.8.1.6"/>
    </reaction>
</comment>
<comment type="cofactor">
    <cofactor evidence="1">
        <name>[4Fe-4S] cluster</name>
        <dbReference type="ChEBI" id="CHEBI:49883"/>
    </cofactor>
    <text evidence="1">Binds 1 [4Fe-4S] cluster. The cluster is coordinated with 3 cysteines and an exchangeable S-adenosyl-L-methionine.</text>
</comment>
<comment type="cofactor">
    <cofactor evidence="1">
        <name>[2Fe-2S] cluster</name>
        <dbReference type="ChEBI" id="CHEBI:190135"/>
    </cofactor>
    <text evidence="1">Binds 1 [2Fe-2S] cluster. The cluster is coordinated with 3 cysteines and 1 arginine.</text>
</comment>
<comment type="pathway">
    <text evidence="1">Cofactor biosynthesis; biotin biosynthesis; biotin from 7,8-diaminononanoate: step 2/2.</text>
</comment>
<comment type="subunit">
    <text evidence="1">Homodimer.</text>
</comment>
<comment type="similarity">
    <text evidence="1">Belongs to the radical SAM superfamily. Biotin synthase family.</text>
</comment>